<reference key="1">
    <citation type="journal article" date="2008" name="Environ. Microbiol.">
        <title>The complete genome sequence of Moorella thermoacetica (f. Clostridium thermoaceticum).</title>
        <authorList>
            <person name="Pierce E."/>
            <person name="Xie G."/>
            <person name="Barabote R.D."/>
            <person name="Saunders E."/>
            <person name="Han C.S."/>
            <person name="Detter J.C."/>
            <person name="Richardson P."/>
            <person name="Brettin T.S."/>
            <person name="Das A."/>
            <person name="Ljungdahl L.G."/>
            <person name="Ragsdale S.W."/>
        </authorList>
    </citation>
    <scope>NUCLEOTIDE SEQUENCE [LARGE SCALE GENOMIC DNA]</scope>
    <source>
        <strain>ATCC 39073 / JCM 9320</strain>
    </source>
</reference>
<gene>
    <name evidence="1" type="primary">mnmG</name>
    <name evidence="1" type="synonym">gidA</name>
    <name type="ordered locus">Moth_2518</name>
</gene>
<proteinExistence type="inferred from homology"/>
<keyword id="KW-0963">Cytoplasm</keyword>
<keyword id="KW-0274">FAD</keyword>
<keyword id="KW-0285">Flavoprotein</keyword>
<keyword id="KW-0520">NAD</keyword>
<keyword id="KW-0819">tRNA processing</keyword>
<name>MNMG_MOOTA</name>
<evidence type="ECO:0000255" key="1">
    <source>
        <dbReference type="HAMAP-Rule" id="MF_00129"/>
    </source>
</evidence>
<feature type="chain" id="PRO_1000016622" description="tRNA uridine 5-carboxymethylaminomethyl modification enzyme MnmG">
    <location>
        <begin position="1"/>
        <end position="630"/>
    </location>
</feature>
<feature type="binding site" evidence="1">
    <location>
        <begin position="13"/>
        <end position="18"/>
    </location>
    <ligand>
        <name>FAD</name>
        <dbReference type="ChEBI" id="CHEBI:57692"/>
    </ligand>
</feature>
<feature type="binding site" evidence="1">
    <location>
        <begin position="272"/>
        <end position="286"/>
    </location>
    <ligand>
        <name>NAD(+)</name>
        <dbReference type="ChEBI" id="CHEBI:57540"/>
    </ligand>
</feature>
<comment type="function">
    <text evidence="1">NAD-binding protein involved in the addition of a carboxymethylaminomethyl (cmnm) group at the wobble position (U34) of certain tRNAs, forming tRNA-cmnm(5)s(2)U34.</text>
</comment>
<comment type="cofactor">
    <cofactor evidence="1">
        <name>FAD</name>
        <dbReference type="ChEBI" id="CHEBI:57692"/>
    </cofactor>
</comment>
<comment type="subunit">
    <text evidence="1">Homodimer. Heterotetramer of two MnmE and two MnmG subunits.</text>
</comment>
<comment type="subcellular location">
    <subcellularLocation>
        <location evidence="1">Cytoplasm</location>
    </subcellularLocation>
</comment>
<comment type="similarity">
    <text evidence="1">Belongs to the MnmG family.</text>
</comment>
<sequence length="630" mass="69353">MYNAGNYDVIVIGAGHAGCEAALAAAKLGCRTLMLTISLESIAMMPCNPSIGGPAKGHLVREIDALGGIMGLNIDRSRIQIRRLNSGKGPAVRALRAQADKKLYQREMTLTLERQEHLDVKQAEVIRILTESGRVKGVLTRTGAYFACRAIVLTTGTYLRGRIIIGEVAYAGGPNGQFPAIELAASLKELGLRMGRFKTGTPPRVSGRSINWDKMTEQPGDPGPLRFSFWEEGPERPNVSCWLTHTNTTTHNIIKDNLHRAPLFSGLIEGKGPRYCPSIEDKVVRFADKPGHQIFLEPEGMGTEEWYVQGLSTSLPEDVQLAVLHSVPGLEQAEMMRPGYAIEYDYIDPTQLKASLECKHIAGLFTAGQINGTSGYEEAAAQGLVAGINAARLVREQEPLILRRDQAYIGVLIDDLVTRGVTEPYRLLTSRAEHRLLLREDNADLRLGRIGYEIGLLDEQRFRKLEAKEKAINDGLVYLGKQHVGGNNPKIQEIIVACGEPPLKGTTSLKDLMRRPRIKYQDLAAAGLVPELPPEIAAEIEMMVKYEGYIAKEKIQVERLAKLEARVLPADLNYSEIRGLSRESIDHLERVKPRSLGQALRIPGVTPADISVLLVYLEQKKREGAKACAG</sequence>
<accession>Q2RFI9</accession>
<protein>
    <recommendedName>
        <fullName evidence="1">tRNA uridine 5-carboxymethylaminomethyl modification enzyme MnmG</fullName>
    </recommendedName>
    <alternativeName>
        <fullName evidence="1">Glucose-inhibited division protein A</fullName>
    </alternativeName>
</protein>
<organism>
    <name type="scientific">Moorella thermoacetica (strain ATCC 39073 / JCM 9320)</name>
    <dbReference type="NCBI Taxonomy" id="264732"/>
    <lineage>
        <taxon>Bacteria</taxon>
        <taxon>Bacillati</taxon>
        <taxon>Bacillota</taxon>
        <taxon>Clostridia</taxon>
        <taxon>Moorellales</taxon>
        <taxon>Moorellaceae</taxon>
        <taxon>Moorella</taxon>
    </lineage>
</organism>
<dbReference type="EMBL" id="CP000232">
    <property type="protein sequence ID" value="ABC20800.1"/>
    <property type="molecule type" value="Genomic_DNA"/>
</dbReference>
<dbReference type="RefSeq" id="YP_431343.1">
    <property type="nucleotide sequence ID" value="NC_007644.1"/>
</dbReference>
<dbReference type="SMR" id="Q2RFI9"/>
<dbReference type="STRING" id="264732.Moth_2518"/>
<dbReference type="EnsemblBacteria" id="ABC20800">
    <property type="protein sequence ID" value="ABC20800"/>
    <property type="gene ID" value="Moth_2518"/>
</dbReference>
<dbReference type="KEGG" id="mta:Moth_2518"/>
<dbReference type="PATRIC" id="fig|264732.11.peg.2741"/>
<dbReference type="eggNOG" id="COG0445">
    <property type="taxonomic scope" value="Bacteria"/>
</dbReference>
<dbReference type="HOGENOM" id="CLU_007831_2_2_9"/>
<dbReference type="OrthoDB" id="9815560at2"/>
<dbReference type="GO" id="GO:0005829">
    <property type="term" value="C:cytosol"/>
    <property type="evidence" value="ECO:0007669"/>
    <property type="project" value="TreeGrafter"/>
</dbReference>
<dbReference type="GO" id="GO:0050660">
    <property type="term" value="F:flavin adenine dinucleotide binding"/>
    <property type="evidence" value="ECO:0007669"/>
    <property type="project" value="UniProtKB-UniRule"/>
</dbReference>
<dbReference type="GO" id="GO:0030488">
    <property type="term" value="P:tRNA methylation"/>
    <property type="evidence" value="ECO:0007669"/>
    <property type="project" value="TreeGrafter"/>
</dbReference>
<dbReference type="GO" id="GO:0002098">
    <property type="term" value="P:tRNA wobble uridine modification"/>
    <property type="evidence" value="ECO:0007669"/>
    <property type="project" value="InterPro"/>
</dbReference>
<dbReference type="FunFam" id="1.10.150.570:FF:000001">
    <property type="entry name" value="tRNA uridine 5-carboxymethylaminomethyl modification enzyme MnmG"/>
    <property type="match status" value="1"/>
</dbReference>
<dbReference type="FunFam" id="3.50.50.60:FF:000002">
    <property type="entry name" value="tRNA uridine 5-carboxymethylaminomethyl modification enzyme MnmG"/>
    <property type="match status" value="1"/>
</dbReference>
<dbReference type="Gene3D" id="3.50.50.60">
    <property type="entry name" value="FAD/NAD(P)-binding domain"/>
    <property type="match status" value="2"/>
</dbReference>
<dbReference type="Gene3D" id="1.10.150.570">
    <property type="entry name" value="GidA associated domain, C-terminal subdomain"/>
    <property type="match status" value="1"/>
</dbReference>
<dbReference type="Gene3D" id="1.10.10.1800">
    <property type="entry name" value="tRNA uridine 5-carboxymethylaminomethyl modification enzyme MnmG/GidA"/>
    <property type="match status" value="1"/>
</dbReference>
<dbReference type="HAMAP" id="MF_00129">
    <property type="entry name" value="MnmG_GidA"/>
    <property type="match status" value="1"/>
</dbReference>
<dbReference type="InterPro" id="IPR036188">
    <property type="entry name" value="FAD/NAD-bd_sf"/>
</dbReference>
<dbReference type="InterPro" id="IPR049312">
    <property type="entry name" value="GIDA_C_N"/>
</dbReference>
<dbReference type="InterPro" id="IPR004416">
    <property type="entry name" value="MnmG"/>
</dbReference>
<dbReference type="InterPro" id="IPR002218">
    <property type="entry name" value="MnmG-rel"/>
</dbReference>
<dbReference type="InterPro" id="IPR020595">
    <property type="entry name" value="MnmG-rel_CS"/>
</dbReference>
<dbReference type="InterPro" id="IPR026904">
    <property type="entry name" value="MnmG_C"/>
</dbReference>
<dbReference type="InterPro" id="IPR047001">
    <property type="entry name" value="MnmG_C_subdom"/>
</dbReference>
<dbReference type="InterPro" id="IPR044920">
    <property type="entry name" value="MnmG_C_subdom_sf"/>
</dbReference>
<dbReference type="InterPro" id="IPR040131">
    <property type="entry name" value="MnmG_N"/>
</dbReference>
<dbReference type="NCBIfam" id="TIGR00136">
    <property type="entry name" value="mnmG_gidA"/>
    <property type="match status" value="1"/>
</dbReference>
<dbReference type="PANTHER" id="PTHR11806">
    <property type="entry name" value="GLUCOSE INHIBITED DIVISION PROTEIN A"/>
    <property type="match status" value="1"/>
</dbReference>
<dbReference type="PANTHER" id="PTHR11806:SF0">
    <property type="entry name" value="PROTEIN MTO1 HOMOLOG, MITOCHONDRIAL"/>
    <property type="match status" value="1"/>
</dbReference>
<dbReference type="Pfam" id="PF01134">
    <property type="entry name" value="GIDA"/>
    <property type="match status" value="1"/>
</dbReference>
<dbReference type="Pfam" id="PF21680">
    <property type="entry name" value="GIDA_C_1st"/>
    <property type="match status" value="1"/>
</dbReference>
<dbReference type="Pfam" id="PF13932">
    <property type="entry name" value="SAM_GIDA_C"/>
    <property type="match status" value="1"/>
</dbReference>
<dbReference type="PRINTS" id="PR00411">
    <property type="entry name" value="PNDRDTASEI"/>
</dbReference>
<dbReference type="SMART" id="SM01228">
    <property type="entry name" value="GIDA_assoc_3"/>
    <property type="match status" value="1"/>
</dbReference>
<dbReference type="SUPFAM" id="SSF51905">
    <property type="entry name" value="FAD/NAD(P)-binding domain"/>
    <property type="match status" value="1"/>
</dbReference>
<dbReference type="PROSITE" id="PS01280">
    <property type="entry name" value="GIDA_1"/>
    <property type="match status" value="1"/>
</dbReference>
<dbReference type="PROSITE" id="PS01281">
    <property type="entry name" value="GIDA_2"/>
    <property type="match status" value="1"/>
</dbReference>